<name>CHED_PYRHO</name>
<organism>
    <name type="scientific">Pyrococcus horikoshii (strain ATCC 700860 / DSM 12428 / JCM 9974 / NBRC 100139 / OT-3)</name>
    <dbReference type="NCBI Taxonomy" id="70601"/>
    <lineage>
        <taxon>Archaea</taxon>
        <taxon>Methanobacteriati</taxon>
        <taxon>Methanobacteriota</taxon>
        <taxon>Thermococci</taxon>
        <taxon>Thermococcales</taxon>
        <taxon>Thermococcaceae</taxon>
        <taxon>Pyrococcus</taxon>
    </lineage>
</organism>
<gene>
    <name evidence="1" type="primary">cheD</name>
    <name type="ordered locus">PH0490</name>
</gene>
<accession>O58226</accession>
<sequence>MKEVKVGIGDYAVGKGNGIISTYGLGSCVGITLYDRVTKVGGLLHALLPEAARYGHRGNPAKYVDTGLQLLLKEVIKLGASKFRLEAKLFGGAQMFDNIRSEELKIGEKNVQVAKRELRKLGIRLVAEDTGGKGGRTIYLDLSTGKVRMRKVTEGKVIEKVY</sequence>
<dbReference type="EC" id="3.5.1.44" evidence="1"/>
<dbReference type="EMBL" id="BA000001">
    <property type="protein sequence ID" value="BAA29578.1"/>
    <property type="molecule type" value="Genomic_DNA"/>
</dbReference>
<dbReference type="PIR" id="E71161">
    <property type="entry name" value="E71161"/>
</dbReference>
<dbReference type="RefSeq" id="WP_010884597.1">
    <property type="nucleotide sequence ID" value="NC_000961.1"/>
</dbReference>
<dbReference type="SMR" id="O58226"/>
<dbReference type="IntAct" id="O58226">
    <property type="interactions" value="1"/>
</dbReference>
<dbReference type="MINT" id="O58226"/>
<dbReference type="STRING" id="70601.gene:9377424"/>
<dbReference type="EnsemblBacteria" id="BAA29578">
    <property type="protein sequence ID" value="BAA29578"/>
    <property type="gene ID" value="BAA29578"/>
</dbReference>
<dbReference type="GeneID" id="1444384"/>
<dbReference type="KEGG" id="pho:PH0490"/>
<dbReference type="eggNOG" id="arCOG02380">
    <property type="taxonomic scope" value="Archaea"/>
</dbReference>
<dbReference type="OrthoDB" id="10499at2157"/>
<dbReference type="Proteomes" id="UP000000752">
    <property type="component" value="Chromosome"/>
</dbReference>
<dbReference type="GO" id="GO:0050568">
    <property type="term" value="F:protein-glutamine glutaminase activity"/>
    <property type="evidence" value="ECO:0007669"/>
    <property type="project" value="UniProtKB-UniRule"/>
</dbReference>
<dbReference type="GO" id="GO:0006935">
    <property type="term" value="P:chemotaxis"/>
    <property type="evidence" value="ECO:0007669"/>
    <property type="project" value="UniProtKB-UniRule"/>
</dbReference>
<dbReference type="CDD" id="cd16352">
    <property type="entry name" value="CheD"/>
    <property type="match status" value="1"/>
</dbReference>
<dbReference type="Gene3D" id="3.30.1330.200">
    <property type="match status" value="1"/>
</dbReference>
<dbReference type="HAMAP" id="MF_01440">
    <property type="entry name" value="CheD"/>
    <property type="match status" value="1"/>
</dbReference>
<dbReference type="InterPro" id="IPR038592">
    <property type="entry name" value="CheD-like_sf"/>
</dbReference>
<dbReference type="InterPro" id="IPR005659">
    <property type="entry name" value="Chemorcpt_Glu_NH3ase_CheD"/>
</dbReference>
<dbReference type="InterPro" id="IPR011324">
    <property type="entry name" value="Cytotoxic_necrot_fac-like_cat"/>
</dbReference>
<dbReference type="PANTHER" id="PTHR35147">
    <property type="entry name" value="CHEMORECEPTOR GLUTAMINE DEAMIDASE CHED-RELATED"/>
    <property type="match status" value="1"/>
</dbReference>
<dbReference type="PANTHER" id="PTHR35147:SF1">
    <property type="entry name" value="CHEMORECEPTOR GLUTAMINE DEAMIDASE CHED-RELATED"/>
    <property type="match status" value="1"/>
</dbReference>
<dbReference type="Pfam" id="PF03975">
    <property type="entry name" value="CheD"/>
    <property type="match status" value="1"/>
</dbReference>
<dbReference type="SUPFAM" id="SSF64438">
    <property type="entry name" value="CNF1/YfiH-like putative cysteine hydrolases"/>
    <property type="match status" value="1"/>
</dbReference>
<feature type="chain" id="PRO_0000251097" description="Probable chemoreceptor glutamine deamidase CheD">
    <location>
        <begin position="1"/>
        <end position="162"/>
    </location>
</feature>
<reference key="1">
    <citation type="journal article" date="1998" name="DNA Res.">
        <title>Complete sequence and gene organization of the genome of a hyper-thermophilic archaebacterium, Pyrococcus horikoshii OT3.</title>
        <authorList>
            <person name="Kawarabayasi Y."/>
            <person name="Sawada M."/>
            <person name="Horikawa H."/>
            <person name="Haikawa Y."/>
            <person name="Hino Y."/>
            <person name="Yamamoto S."/>
            <person name="Sekine M."/>
            <person name="Baba S."/>
            <person name="Kosugi H."/>
            <person name="Hosoyama A."/>
            <person name="Nagai Y."/>
            <person name="Sakai M."/>
            <person name="Ogura K."/>
            <person name="Otsuka R."/>
            <person name="Nakazawa H."/>
            <person name="Takamiya M."/>
            <person name="Ohfuku Y."/>
            <person name="Funahashi T."/>
            <person name="Tanaka T."/>
            <person name="Kudoh Y."/>
            <person name="Yamazaki J."/>
            <person name="Kushida N."/>
            <person name="Oguchi A."/>
            <person name="Aoki K."/>
            <person name="Yoshizawa T."/>
            <person name="Nakamura Y."/>
            <person name="Robb F.T."/>
            <person name="Horikoshi K."/>
            <person name="Masuchi Y."/>
            <person name="Shizuya H."/>
            <person name="Kikuchi H."/>
        </authorList>
    </citation>
    <scope>NUCLEOTIDE SEQUENCE [LARGE SCALE GENOMIC DNA]</scope>
    <source>
        <strain>ATCC 700860 / DSM 12428 / JCM 9974 / NBRC 100139 / OT-3</strain>
    </source>
</reference>
<keyword id="KW-0145">Chemotaxis</keyword>
<keyword id="KW-0378">Hydrolase</keyword>
<comment type="function">
    <text evidence="1">Probably deamidates glutamine residues to glutamate on methyl-accepting chemotaxis receptors (MCPs), playing an important role in chemotaxis.</text>
</comment>
<comment type="catalytic activity">
    <reaction evidence="1">
        <text>L-glutaminyl-[protein] + H2O = L-glutamyl-[protein] + NH4(+)</text>
        <dbReference type="Rhea" id="RHEA:16441"/>
        <dbReference type="Rhea" id="RHEA-COMP:10207"/>
        <dbReference type="Rhea" id="RHEA-COMP:10208"/>
        <dbReference type="ChEBI" id="CHEBI:15377"/>
        <dbReference type="ChEBI" id="CHEBI:28938"/>
        <dbReference type="ChEBI" id="CHEBI:29973"/>
        <dbReference type="ChEBI" id="CHEBI:30011"/>
        <dbReference type="EC" id="3.5.1.44"/>
    </reaction>
</comment>
<comment type="similarity">
    <text evidence="1">Belongs to the CheD family.</text>
</comment>
<proteinExistence type="inferred from homology"/>
<protein>
    <recommendedName>
        <fullName evidence="1">Probable chemoreceptor glutamine deamidase CheD</fullName>
        <ecNumber evidence="1">3.5.1.44</ecNumber>
    </recommendedName>
</protein>
<evidence type="ECO:0000255" key="1">
    <source>
        <dbReference type="HAMAP-Rule" id="MF_01440"/>
    </source>
</evidence>